<accession>Q6D5P8</accession>
<feature type="chain" id="PRO_0000239242" description="Zinc transport protein ZntB">
    <location>
        <begin position="1"/>
        <end position="327"/>
    </location>
</feature>
<feature type="topological domain" description="Cytoplasmic" evidence="1">
    <location>
        <begin position="1"/>
        <end position="271"/>
    </location>
</feature>
<feature type="transmembrane region" description="Helical" evidence="1">
    <location>
        <begin position="272"/>
        <end position="292"/>
    </location>
</feature>
<feature type="topological domain" description="Periplasmic" evidence="1">
    <location>
        <begin position="293"/>
        <end position="300"/>
    </location>
</feature>
<feature type="transmembrane region" description="Helical" evidence="1">
    <location>
        <begin position="301"/>
        <end position="321"/>
    </location>
</feature>
<feature type="topological domain" description="Cytoplasmic" evidence="1">
    <location>
        <begin position="322"/>
        <end position="327"/>
    </location>
</feature>
<organism>
    <name type="scientific">Pectobacterium atrosepticum (strain SCRI 1043 / ATCC BAA-672)</name>
    <name type="common">Erwinia carotovora subsp. atroseptica</name>
    <dbReference type="NCBI Taxonomy" id="218491"/>
    <lineage>
        <taxon>Bacteria</taxon>
        <taxon>Pseudomonadati</taxon>
        <taxon>Pseudomonadota</taxon>
        <taxon>Gammaproteobacteria</taxon>
        <taxon>Enterobacterales</taxon>
        <taxon>Pectobacteriaceae</taxon>
        <taxon>Pectobacterium</taxon>
    </lineage>
</organism>
<protein>
    <recommendedName>
        <fullName evidence="1">Zinc transport protein ZntB</fullName>
    </recommendedName>
</protein>
<name>ZNTB_PECAS</name>
<proteinExistence type="inferred from homology"/>
<dbReference type="EMBL" id="BX950851">
    <property type="protein sequence ID" value="CAG74894.1"/>
    <property type="molecule type" value="Genomic_DNA"/>
</dbReference>
<dbReference type="RefSeq" id="WP_011093555.1">
    <property type="nucleotide sequence ID" value="NC_004547.2"/>
</dbReference>
<dbReference type="SMR" id="Q6D5P8"/>
<dbReference type="STRING" id="218491.ECA1993"/>
<dbReference type="KEGG" id="eca:ECA1993"/>
<dbReference type="PATRIC" id="fig|218491.5.peg.2030"/>
<dbReference type="eggNOG" id="COG0598">
    <property type="taxonomic scope" value="Bacteria"/>
</dbReference>
<dbReference type="HOGENOM" id="CLU_007127_2_0_6"/>
<dbReference type="OrthoDB" id="9803484at2"/>
<dbReference type="Proteomes" id="UP000007966">
    <property type="component" value="Chromosome"/>
</dbReference>
<dbReference type="GO" id="GO:0005886">
    <property type="term" value="C:plasma membrane"/>
    <property type="evidence" value="ECO:0007669"/>
    <property type="project" value="UniProtKB-SubCell"/>
</dbReference>
<dbReference type="GO" id="GO:0050897">
    <property type="term" value="F:cobalt ion binding"/>
    <property type="evidence" value="ECO:0007669"/>
    <property type="project" value="TreeGrafter"/>
</dbReference>
<dbReference type="GO" id="GO:0015087">
    <property type="term" value="F:cobalt ion transmembrane transporter activity"/>
    <property type="evidence" value="ECO:0007669"/>
    <property type="project" value="TreeGrafter"/>
</dbReference>
<dbReference type="GO" id="GO:0000287">
    <property type="term" value="F:magnesium ion binding"/>
    <property type="evidence" value="ECO:0007669"/>
    <property type="project" value="TreeGrafter"/>
</dbReference>
<dbReference type="GO" id="GO:0015095">
    <property type="term" value="F:magnesium ion transmembrane transporter activity"/>
    <property type="evidence" value="ECO:0007669"/>
    <property type="project" value="TreeGrafter"/>
</dbReference>
<dbReference type="GO" id="GO:0005385">
    <property type="term" value="F:zinc ion transmembrane transporter activity"/>
    <property type="evidence" value="ECO:0007669"/>
    <property type="project" value="UniProtKB-UniRule"/>
</dbReference>
<dbReference type="CDD" id="cd12833">
    <property type="entry name" value="ZntB-like_1"/>
    <property type="match status" value="1"/>
</dbReference>
<dbReference type="Gene3D" id="3.30.460.20">
    <property type="entry name" value="CorA soluble domain-like"/>
    <property type="match status" value="1"/>
</dbReference>
<dbReference type="Gene3D" id="1.20.58.340">
    <property type="entry name" value="Magnesium transport protein CorA, transmembrane region"/>
    <property type="match status" value="2"/>
</dbReference>
<dbReference type="HAMAP" id="MF_01565">
    <property type="entry name" value="ZntB"/>
    <property type="match status" value="1"/>
</dbReference>
<dbReference type="InterPro" id="IPR045861">
    <property type="entry name" value="CorA_cytoplasmic_dom"/>
</dbReference>
<dbReference type="InterPro" id="IPR045863">
    <property type="entry name" value="CorA_TM1_TM2"/>
</dbReference>
<dbReference type="InterPro" id="IPR002523">
    <property type="entry name" value="MgTranspt_CorA/ZnTranspt_ZntB"/>
</dbReference>
<dbReference type="InterPro" id="IPR023714">
    <property type="entry name" value="Zn_transp_ZntB"/>
</dbReference>
<dbReference type="NCBIfam" id="NF007092">
    <property type="entry name" value="PRK09546.1"/>
    <property type="match status" value="1"/>
</dbReference>
<dbReference type="PANTHER" id="PTHR46494">
    <property type="entry name" value="CORA FAMILY METAL ION TRANSPORTER (EUROFUNG)"/>
    <property type="match status" value="1"/>
</dbReference>
<dbReference type="PANTHER" id="PTHR46494:SF3">
    <property type="entry name" value="ZINC TRANSPORT PROTEIN ZNTB"/>
    <property type="match status" value="1"/>
</dbReference>
<dbReference type="Pfam" id="PF01544">
    <property type="entry name" value="CorA"/>
    <property type="match status" value="1"/>
</dbReference>
<dbReference type="SUPFAM" id="SSF143865">
    <property type="entry name" value="CorA soluble domain-like"/>
    <property type="match status" value="1"/>
</dbReference>
<dbReference type="SUPFAM" id="SSF144083">
    <property type="entry name" value="Magnesium transport protein CorA, transmembrane region"/>
    <property type="match status" value="1"/>
</dbReference>
<keyword id="KW-0997">Cell inner membrane</keyword>
<keyword id="KW-1003">Cell membrane</keyword>
<keyword id="KW-0406">Ion transport</keyword>
<keyword id="KW-0472">Membrane</keyword>
<keyword id="KW-1185">Reference proteome</keyword>
<keyword id="KW-0812">Transmembrane</keyword>
<keyword id="KW-1133">Transmembrane helix</keyword>
<keyword id="KW-0813">Transport</keyword>
<keyword id="KW-0862">Zinc</keyword>
<reference key="1">
    <citation type="journal article" date="2004" name="Proc. Natl. Acad. Sci. U.S.A.">
        <title>Genome sequence of the enterobacterial phytopathogen Erwinia carotovora subsp. atroseptica and characterization of virulence factors.</title>
        <authorList>
            <person name="Bell K.S."/>
            <person name="Sebaihia M."/>
            <person name="Pritchard L."/>
            <person name="Holden M.T.G."/>
            <person name="Hyman L.J."/>
            <person name="Holeva M.C."/>
            <person name="Thomson N.R."/>
            <person name="Bentley S.D."/>
            <person name="Churcher L.J.C."/>
            <person name="Mungall K."/>
            <person name="Atkin R."/>
            <person name="Bason N."/>
            <person name="Brooks K."/>
            <person name="Chillingworth T."/>
            <person name="Clark K."/>
            <person name="Doggett J."/>
            <person name="Fraser A."/>
            <person name="Hance Z."/>
            <person name="Hauser H."/>
            <person name="Jagels K."/>
            <person name="Moule S."/>
            <person name="Norbertczak H."/>
            <person name="Ormond D."/>
            <person name="Price C."/>
            <person name="Quail M.A."/>
            <person name="Sanders M."/>
            <person name="Walker D."/>
            <person name="Whitehead S."/>
            <person name="Salmond G.P.C."/>
            <person name="Birch P.R.J."/>
            <person name="Parkhill J."/>
            <person name="Toth I.K."/>
        </authorList>
    </citation>
    <scope>NUCLEOTIDE SEQUENCE [LARGE SCALE GENOMIC DNA]</scope>
    <source>
        <strain>SCRI 1043 / ATCC BAA-672</strain>
    </source>
</reference>
<comment type="function">
    <text evidence="1">Zinc transporter. Acts as a Zn(2+):proton symporter, which likely mediates zinc ion uptake.</text>
</comment>
<comment type="catalytic activity">
    <reaction evidence="1">
        <text>Zn(2+)(out) + H(+)(out) = Zn(2+)(in) + H(+)(in)</text>
        <dbReference type="Rhea" id="RHEA:71195"/>
        <dbReference type="ChEBI" id="CHEBI:15378"/>
        <dbReference type="ChEBI" id="CHEBI:29105"/>
    </reaction>
    <physiologicalReaction direction="left-to-right" evidence="1">
        <dbReference type="Rhea" id="RHEA:71196"/>
    </physiologicalReaction>
</comment>
<comment type="subcellular location">
    <subcellularLocation>
        <location evidence="1">Cell inner membrane</location>
        <topology evidence="1">Multi-pass membrane protein</topology>
    </subcellularLocation>
</comment>
<comment type="similarity">
    <text evidence="1">Belongs to the CorA metal ion transporter (MIT) (TC 1.A.35) family.</text>
</comment>
<gene>
    <name evidence="1" type="primary">zntB</name>
    <name type="ordered locus">ECA1993</name>
</gene>
<evidence type="ECO:0000255" key="1">
    <source>
        <dbReference type="HAMAP-Rule" id="MF_01565"/>
    </source>
</evidence>
<sequence length="327" mass="36505">MESFAGKELQHSGAVHAYQLDGKGGITPIGEQDVVNSEKPCWLHLDSTVPASARWLNKTLVVPDSVRTALAGESVRPRVTRLGEGTLITLRSINLNANARPDQLVAVRVFITDKLIISTRRRKILAIDEILTDLKEGNGPTDSGNWLVSIAEALTDHTSEFIDDLHEKIIDLEDDLLEQKIPPRGELALIRKQLIVLRRYMTPQRDVFSRISGEKLPWMQDDDRRRMQEIADRLGRGLEDLDASVARTTVLSDEITALMTEAMNRRTYTMSLLAMVFLPTTFLTGLFGVNLGGIPGGDAPFGFFTFCLMLVILVGGVAWWLKRSKWL</sequence>